<gene>
    <name evidence="1" type="primary">ppa</name>
    <name type="ordered locus">Atu2661</name>
    <name type="ORF">AGR_C_4822</name>
</gene>
<comment type="function">
    <text evidence="1">Catalyzes the hydrolysis of inorganic pyrophosphate (PPi) forming two phosphate ions.</text>
</comment>
<comment type="catalytic activity">
    <reaction evidence="1">
        <text>diphosphate + H2O = 2 phosphate + H(+)</text>
        <dbReference type="Rhea" id="RHEA:24576"/>
        <dbReference type="ChEBI" id="CHEBI:15377"/>
        <dbReference type="ChEBI" id="CHEBI:15378"/>
        <dbReference type="ChEBI" id="CHEBI:33019"/>
        <dbReference type="ChEBI" id="CHEBI:43474"/>
        <dbReference type="EC" id="3.6.1.1"/>
    </reaction>
</comment>
<comment type="cofactor">
    <cofactor evidence="1">
        <name>Mg(2+)</name>
        <dbReference type="ChEBI" id="CHEBI:18420"/>
    </cofactor>
</comment>
<comment type="subunit">
    <text evidence="1">Homohexamer.</text>
</comment>
<comment type="subcellular location">
    <subcellularLocation>
        <location evidence="1">Cytoplasm</location>
    </subcellularLocation>
</comment>
<comment type="similarity">
    <text evidence="1">Belongs to the PPase family.</text>
</comment>
<organism>
    <name type="scientific">Agrobacterium fabrum (strain C58 / ATCC 33970)</name>
    <name type="common">Agrobacterium tumefaciens (strain C58)</name>
    <dbReference type="NCBI Taxonomy" id="176299"/>
    <lineage>
        <taxon>Bacteria</taxon>
        <taxon>Pseudomonadati</taxon>
        <taxon>Pseudomonadota</taxon>
        <taxon>Alphaproteobacteria</taxon>
        <taxon>Hyphomicrobiales</taxon>
        <taxon>Rhizobiaceae</taxon>
        <taxon>Rhizobium/Agrobacterium group</taxon>
        <taxon>Agrobacterium</taxon>
        <taxon>Agrobacterium tumefaciens complex</taxon>
    </lineage>
</organism>
<reference key="1">
    <citation type="journal article" date="2001" name="Science">
        <title>The genome of the natural genetic engineer Agrobacterium tumefaciens C58.</title>
        <authorList>
            <person name="Wood D.W."/>
            <person name="Setubal J.C."/>
            <person name="Kaul R."/>
            <person name="Monks D.E."/>
            <person name="Kitajima J.P."/>
            <person name="Okura V.K."/>
            <person name="Zhou Y."/>
            <person name="Chen L."/>
            <person name="Wood G.E."/>
            <person name="Almeida N.F. Jr."/>
            <person name="Woo L."/>
            <person name="Chen Y."/>
            <person name="Paulsen I.T."/>
            <person name="Eisen J.A."/>
            <person name="Karp P.D."/>
            <person name="Bovee D. Sr."/>
            <person name="Chapman P."/>
            <person name="Clendenning J."/>
            <person name="Deatherage G."/>
            <person name="Gillet W."/>
            <person name="Grant C."/>
            <person name="Kutyavin T."/>
            <person name="Levy R."/>
            <person name="Li M.-J."/>
            <person name="McClelland E."/>
            <person name="Palmieri A."/>
            <person name="Raymond C."/>
            <person name="Rouse G."/>
            <person name="Saenphimmachak C."/>
            <person name="Wu Z."/>
            <person name="Romero P."/>
            <person name="Gordon D."/>
            <person name="Zhang S."/>
            <person name="Yoo H."/>
            <person name="Tao Y."/>
            <person name="Biddle P."/>
            <person name="Jung M."/>
            <person name="Krespan W."/>
            <person name="Perry M."/>
            <person name="Gordon-Kamm B."/>
            <person name="Liao L."/>
            <person name="Kim S."/>
            <person name="Hendrick C."/>
            <person name="Zhao Z.-Y."/>
            <person name="Dolan M."/>
            <person name="Chumley F."/>
            <person name="Tingey S.V."/>
            <person name="Tomb J.-F."/>
            <person name="Gordon M.P."/>
            <person name="Olson M.V."/>
            <person name="Nester E.W."/>
        </authorList>
    </citation>
    <scope>NUCLEOTIDE SEQUENCE [LARGE SCALE GENOMIC DNA]</scope>
    <source>
        <strain>C58 / ATCC 33970</strain>
    </source>
</reference>
<reference key="2">
    <citation type="journal article" date="2001" name="Science">
        <title>Genome sequence of the plant pathogen and biotechnology agent Agrobacterium tumefaciens C58.</title>
        <authorList>
            <person name="Goodner B."/>
            <person name="Hinkle G."/>
            <person name="Gattung S."/>
            <person name="Miller N."/>
            <person name="Blanchard M."/>
            <person name="Qurollo B."/>
            <person name="Goldman B.S."/>
            <person name="Cao Y."/>
            <person name="Askenazi M."/>
            <person name="Halling C."/>
            <person name="Mullin L."/>
            <person name="Houmiel K."/>
            <person name="Gordon J."/>
            <person name="Vaudin M."/>
            <person name="Iartchouk O."/>
            <person name="Epp A."/>
            <person name="Liu F."/>
            <person name="Wollam C."/>
            <person name="Allinger M."/>
            <person name="Doughty D."/>
            <person name="Scott C."/>
            <person name="Lappas C."/>
            <person name="Markelz B."/>
            <person name="Flanagan C."/>
            <person name="Crowell C."/>
            <person name="Gurson J."/>
            <person name="Lomo C."/>
            <person name="Sear C."/>
            <person name="Strub G."/>
            <person name="Cielo C."/>
            <person name="Slater S."/>
        </authorList>
    </citation>
    <scope>NUCLEOTIDE SEQUENCE [LARGE SCALE GENOMIC DNA]</scope>
    <source>
        <strain>C58 / ATCC 33970</strain>
    </source>
</reference>
<dbReference type="EC" id="3.6.1.1" evidence="1"/>
<dbReference type="EMBL" id="AE007869">
    <property type="protein sequence ID" value="AAK88383.2"/>
    <property type="molecule type" value="Genomic_DNA"/>
</dbReference>
<dbReference type="PIR" id="AD2903">
    <property type="entry name" value="AD2903"/>
</dbReference>
<dbReference type="PIR" id="F97678">
    <property type="entry name" value="F97678"/>
</dbReference>
<dbReference type="RefSeq" id="NP_355598.2">
    <property type="nucleotide sequence ID" value="NC_003062.2"/>
</dbReference>
<dbReference type="RefSeq" id="WP_006310823.1">
    <property type="nucleotide sequence ID" value="NC_003062.2"/>
</dbReference>
<dbReference type="SMR" id="Q8UC37"/>
<dbReference type="STRING" id="176299.Atu2661"/>
<dbReference type="EnsemblBacteria" id="AAK88383">
    <property type="protein sequence ID" value="AAK88383"/>
    <property type="gene ID" value="Atu2661"/>
</dbReference>
<dbReference type="GeneID" id="1134699"/>
<dbReference type="KEGG" id="atu:Atu2661"/>
<dbReference type="PATRIC" id="fig|176299.10.peg.2668"/>
<dbReference type="eggNOG" id="COG0221">
    <property type="taxonomic scope" value="Bacteria"/>
</dbReference>
<dbReference type="HOGENOM" id="CLU_073198_1_0_5"/>
<dbReference type="OrthoDB" id="5187599at2"/>
<dbReference type="PhylomeDB" id="Q8UC37"/>
<dbReference type="BioCyc" id="AGRO:ATU2661-MONOMER"/>
<dbReference type="Proteomes" id="UP000000813">
    <property type="component" value="Chromosome circular"/>
</dbReference>
<dbReference type="GO" id="GO:0005737">
    <property type="term" value="C:cytoplasm"/>
    <property type="evidence" value="ECO:0007669"/>
    <property type="project" value="UniProtKB-SubCell"/>
</dbReference>
<dbReference type="GO" id="GO:0004427">
    <property type="term" value="F:inorganic diphosphate phosphatase activity"/>
    <property type="evidence" value="ECO:0007669"/>
    <property type="project" value="UniProtKB-UniRule"/>
</dbReference>
<dbReference type="GO" id="GO:0000287">
    <property type="term" value="F:magnesium ion binding"/>
    <property type="evidence" value="ECO:0007669"/>
    <property type="project" value="UniProtKB-UniRule"/>
</dbReference>
<dbReference type="GO" id="GO:0006796">
    <property type="term" value="P:phosphate-containing compound metabolic process"/>
    <property type="evidence" value="ECO:0007669"/>
    <property type="project" value="InterPro"/>
</dbReference>
<dbReference type="CDD" id="cd00412">
    <property type="entry name" value="pyrophosphatase"/>
    <property type="match status" value="1"/>
</dbReference>
<dbReference type="FunFam" id="3.90.80.10:FF:000003">
    <property type="entry name" value="Inorganic pyrophosphatase"/>
    <property type="match status" value="1"/>
</dbReference>
<dbReference type="Gene3D" id="3.90.80.10">
    <property type="entry name" value="Inorganic pyrophosphatase"/>
    <property type="match status" value="1"/>
</dbReference>
<dbReference type="HAMAP" id="MF_00209">
    <property type="entry name" value="Inorganic_PPase"/>
    <property type="match status" value="1"/>
</dbReference>
<dbReference type="InterPro" id="IPR008162">
    <property type="entry name" value="Pyrophosphatase"/>
</dbReference>
<dbReference type="InterPro" id="IPR036649">
    <property type="entry name" value="Pyrophosphatase_sf"/>
</dbReference>
<dbReference type="NCBIfam" id="NF002317">
    <property type="entry name" value="PRK01250.1"/>
    <property type="match status" value="1"/>
</dbReference>
<dbReference type="PANTHER" id="PTHR10286">
    <property type="entry name" value="INORGANIC PYROPHOSPHATASE"/>
    <property type="match status" value="1"/>
</dbReference>
<dbReference type="Pfam" id="PF00719">
    <property type="entry name" value="Pyrophosphatase"/>
    <property type="match status" value="1"/>
</dbReference>
<dbReference type="SUPFAM" id="SSF50324">
    <property type="entry name" value="Inorganic pyrophosphatase"/>
    <property type="match status" value="1"/>
</dbReference>
<dbReference type="PROSITE" id="PS00387">
    <property type="entry name" value="PPASE"/>
    <property type="match status" value="1"/>
</dbReference>
<proteinExistence type="inferred from homology"/>
<sequence length="177" mass="19902">MRIDAISIGKNPPDDINVIVEVPVGGHPIKYEMDKDAGALIVDRFLYTPMTYPGNYGFVPHTLSDDGDPIDVLICNTRPLVPGCVINVRPIGVMIMEDDGGKDEKILAVPAPKLTQRYDKVHNYTDLPEITLKQIEHFFEHYKDLEPGKWVKMGGWQDVDVAKKLIVEAIERYKTQG</sequence>
<name>IPYR_AGRFC</name>
<keyword id="KW-0963">Cytoplasm</keyword>
<keyword id="KW-0378">Hydrolase</keyword>
<keyword id="KW-0460">Magnesium</keyword>
<keyword id="KW-0479">Metal-binding</keyword>
<keyword id="KW-1185">Reference proteome</keyword>
<protein>
    <recommendedName>
        <fullName evidence="1">Inorganic pyrophosphatase</fullName>
        <ecNumber evidence="1">3.6.1.1</ecNumber>
    </recommendedName>
    <alternativeName>
        <fullName evidence="1">Pyrophosphate phospho-hydrolase</fullName>
        <shortName evidence="1">PPase</shortName>
    </alternativeName>
</protein>
<accession>Q8UC37</accession>
<feature type="chain" id="PRO_0000137473" description="Inorganic pyrophosphatase">
    <location>
        <begin position="1"/>
        <end position="177"/>
    </location>
</feature>
<feature type="binding site" evidence="1">
    <location>
        <position position="30"/>
    </location>
    <ligand>
        <name>substrate</name>
    </ligand>
</feature>
<feature type="binding site" evidence="1">
    <location>
        <position position="44"/>
    </location>
    <ligand>
        <name>substrate</name>
    </ligand>
</feature>
<feature type="binding site" evidence="1">
    <location>
        <position position="56"/>
    </location>
    <ligand>
        <name>substrate</name>
    </ligand>
</feature>
<feature type="binding site" evidence="1">
    <location>
        <position position="66"/>
    </location>
    <ligand>
        <name>Mg(2+)</name>
        <dbReference type="ChEBI" id="CHEBI:18420"/>
        <label>1</label>
    </ligand>
</feature>
<feature type="binding site" evidence="1">
    <location>
        <position position="71"/>
    </location>
    <ligand>
        <name>Mg(2+)</name>
        <dbReference type="ChEBI" id="CHEBI:18420"/>
        <label>1</label>
    </ligand>
</feature>
<feature type="binding site" evidence="1">
    <location>
        <position position="71"/>
    </location>
    <ligand>
        <name>Mg(2+)</name>
        <dbReference type="ChEBI" id="CHEBI:18420"/>
        <label>2</label>
    </ligand>
</feature>
<feature type="binding site" evidence="1">
    <location>
        <position position="103"/>
    </location>
    <ligand>
        <name>Mg(2+)</name>
        <dbReference type="ChEBI" id="CHEBI:18420"/>
        <label>1</label>
    </ligand>
</feature>
<feature type="binding site" evidence="1">
    <location>
        <position position="142"/>
    </location>
    <ligand>
        <name>substrate</name>
    </ligand>
</feature>
<evidence type="ECO:0000255" key="1">
    <source>
        <dbReference type="HAMAP-Rule" id="MF_00209"/>
    </source>
</evidence>